<feature type="signal peptide" evidence="3">
    <location>
        <begin position="1"/>
        <end position="14"/>
    </location>
</feature>
<feature type="chain" id="PRO_5018576037" description="Endoglycoceramidase I" evidence="2">
    <location>
        <begin position="15"/>
        <end position="492"/>
    </location>
</feature>
<feature type="region of interest" description="Disordered" evidence="4">
    <location>
        <begin position="467"/>
        <end position="492"/>
    </location>
</feature>
<feature type="active site" description="Proton donor" evidence="1">
    <location>
        <position position="214"/>
    </location>
</feature>
<feature type="active site" description="Nucleophile" evidence="8">
    <location>
        <position position="339"/>
    </location>
</feature>
<feature type="binding site" evidence="5 11 12">
    <location>
        <position position="61"/>
    </location>
    <ligand>
        <name>substrate</name>
    </ligand>
</feature>
<feature type="binding site" evidence="5 12">
    <location>
        <position position="62"/>
    </location>
    <ligand>
        <name>substrate</name>
    </ligand>
</feature>
<feature type="binding site" evidence="5 11 12">
    <location>
        <begin position="131"/>
        <end position="133"/>
    </location>
    <ligand>
        <name>substrate</name>
    </ligand>
</feature>
<feature type="binding site" evidence="5 11 12">
    <location>
        <begin position="213"/>
        <end position="214"/>
    </location>
    <ligand>
        <name>substrate</name>
    </ligand>
</feature>
<feature type="binding site" evidence="5 11 12">
    <location>
        <position position="265"/>
    </location>
    <ligand>
        <name>substrate</name>
    </ligand>
</feature>
<feature type="binding site" evidence="5 11 12">
    <location>
        <position position="298"/>
    </location>
    <ligand>
        <name>substrate</name>
    </ligand>
</feature>
<feature type="binding site" evidence="5 11 12">
    <location>
        <position position="302"/>
    </location>
    <ligand>
        <name>substrate</name>
    </ligand>
</feature>
<feature type="binding site" evidence="5 11 12">
    <location>
        <position position="365"/>
    </location>
    <ligand>
        <name>substrate</name>
    </ligand>
</feature>
<feature type="lipid moiety-binding region" description="N-palmitoyl cysteine" evidence="3">
    <location>
        <position position="15"/>
    </location>
</feature>
<feature type="lipid moiety-binding region" description="S-diacylglycerol cysteine" evidence="3">
    <location>
        <position position="15"/>
    </location>
</feature>
<feature type="disulfide bond" evidence="5 10 11 12">
    <location>
        <begin position="224"/>
        <end position="229"/>
    </location>
</feature>
<feature type="disulfide bond" evidence="5 10 11 12">
    <location>
        <begin position="294"/>
        <end position="313"/>
    </location>
</feature>
<feature type="mutagenesis site" description="Abolishes enzyme activity." evidence="5">
    <original>K</original>
    <variation>A</variation>
    <location>
        <position position="61"/>
    </location>
</feature>
<feature type="mutagenesis site" description="Decreases enzyme activity." evidence="5">
    <original>D</original>
    <variation>A</variation>
    <location>
        <position position="62"/>
    </location>
</feature>
<feature type="mutagenesis site" description="Abolishes enzyme activity." evidence="5">
    <original>H</original>
    <variation>A</variation>
    <location>
        <position position="131"/>
    </location>
</feature>
<feature type="mutagenesis site" description="Abolishes enzyme activity." evidence="5">
    <original>D</original>
    <variation>A</variation>
    <location>
        <position position="133"/>
    </location>
</feature>
<feature type="mutagenesis site" description="Abolishes enzyme activity." evidence="5">
    <original>N</original>
    <variation>A</variation>
    <location>
        <position position="213"/>
    </location>
</feature>
<feature type="mutagenesis site" description="Severely decreases enzyme activity." evidence="5">
    <original>N</original>
    <variation>A</variation>
    <location>
        <position position="265"/>
    </location>
</feature>
<feature type="mutagenesis site" description="Abolishes enzyme activity." evidence="5">
    <original>Q</original>
    <variation>A</variation>
    <location>
        <position position="298"/>
    </location>
</feature>
<feature type="mutagenesis site" description="Abolishes enzyme activity." evidence="5">
    <original>Y</original>
    <variation>A</variation>
    <location>
        <position position="302"/>
    </location>
</feature>
<feature type="mutagenesis site" description="Abolishes enzyme activity." evidence="5">
    <original>E</original>
    <variation>S</variation>
    <location>
        <position position="339"/>
    </location>
</feature>
<feature type="mutagenesis site" description="Abolishes enzyme activity." evidence="5">
    <original>D</original>
    <variation>A</variation>
    <variation>E</variation>
    <variation>F</variation>
    <variation>K</variation>
    <variation>L</variation>
    <variation>W</variation>
    <variation>Y</variation>
    <location>
        <position position="342"/>
    </location>
</feature>
<feature type="mutagenesis site" description="Severely decreases enzyme activity." evidence="5">
    <original>D</original>
    <variation>N</variation>
    <variation>Q</variation>
    <location>
        <position position="342"/>
    </location>
</feature>
<feature type="mutagenesis site" description="Abolishes enzyme activity." evidence="5">
    <original>W</original>
    <variation>A</variation>
    <location>
        <position position="365"/>
    </location>
</feature>
<feature type="strand" evidence="13">
    <location>
        <begin position="37"/>
        <end position="39"/>
    </location>
</feature>
<feature type="strand" evidence="13">
    <location>
        <begin position="42"/>
        <end position="44"/>
    </location>
</feature>
<feature type="strand" evidence="13">
    <location>
        <begin position="54"/>
        <end position="58"/>
    </location>
</feature>
<feature type="strand" evidence="13">
    <location>
        <begin position="62"/>
        <end position="64"/>
    </location>
</feature>
<feature type="helix" evidence="13">
    <location>
        <begin position="74"/>
        <end position="82"/>
    </location>
</feature>
<feature type="strand" evidence="13">
    <location>
        <begin position="87"/>
        <end position="92"/>
    </location>
</feature>
<feature type="helix" evidence="13">
    <location>
        <begin position="94"/>
        <end position="97"/>
    </location>
</feature>
<feature type="helix" evidence="13">
    <location>
        <begin position="106"/>
        <end position="121"/>
    </location>
</feature>
<feature type="strand" evidence="13">
    <location>
        <begin position="125"/>
        <end position="130"/>
    </location>
</feature>
<feature type="strand" evidence="13">
    <location>
        <begin position="133"/>
        <end position="136"/>
    </location>
</feature>
<feature type="helix" evidence="13">
    <location>
        <begin position="137"/>
        <end position="139"/>
    </location>
</feature>
<feature type="strand" evidence="13">
    <location>
        <begin position="142"/>
        <end position="144"/>
    </location>
</feature>
<feature type="helix" evidence="13">
    <location>
        <begin position="146"/>
        <end position="148"/>
    </location>
</feature>
<feature type="helix" evidence="13">
    <location>
        <begin position="164"/>
        <end position="167"/>
    </location>
</feature>
<feature type="helix" evidence="13">
    <location>
        <begin position="169"/>
        <end position="179"/>
    </location>
</feature>
<feature type="turn" evidence="13">
    <location>
        <begin position="180"/>
        <end position="183"/>
    </location>
</feature>
<feature type="helix" evidence="13">
    <location>
        <begin position="185"/>
        <end position="200"/>
    </location>
</feature>
<feature type="strand" evidence="13">
    <location>
        <begin position="206"/>
        <end position="210"/>
    </location>
</feature>
<feature type="helix" evidence="13">
    <location>
        <begin position="221"/>
        <end position="224"/>
    </location>
</feature>
<feature type="turn" evidence="13">
    <location>
        <begin position="225"/>
        <end position="227"/>
    </location>
</feature>
<feature type="helix" evidence="13">
    <location>
        <begin position="230"/>
        <end position="250"/>
    </location>
</feature>
<feature type="strand" evidence="13">
    <location>
        <begin position="256"/>
        <end position="258"/>
    </location>
</feature>
<feature type="helix" evidence="13">
    <location>
        <begin position="262"/>
        <end position="266"/>
    </location>
</feature>
<feature type="turn" evidence="13">
    <location>
        <begin position="275"/>
        <end position="277"/>
    </location>
</feature>
<feature type="strand" evidence="13">
    <location>
        <begin position="283"/>
        <end position="288"/>
    </location>
</feature>
<feature type="helix" evidence="13">
    <location>
        <begin position="295"/>
        <end position="303"/>
    </location>
</feature>
<feature type="helix" evidence="13">
    <location>
        <begin position="307"/>
        <end position="312"/>
    </location>
</feature>
<feature type="helix" evidence="13">
    <location>
        <begin position="313"/>
        <end position="331"/>
    </location>
</feature>
<feature type="strand" evidence="13">
    <location>
        <begin position="335"/>
        <end position="337"/>
    </location>
</feature>
<feature type="strand" evidence="13">
    <location>
        <begin position="339"/>
        <end position="341"/>
    </location>
</feature>
<feature type="turn" evidence="13">
    <location>
        <begin position="345"/>
        <end position="347"/>
    </location>
</feature>
<feature type="helix" evidence="13">
    <location>
        <begin position="348"/>
        <end position="358"/>
    </location>
</feature>
<feature type="strand" evidence="13">
    <location>
        <begin position="361"/>
        <end position="365"/>
    </location>
</feature>
<feature type="helix" evidence="13">
    <location>
        <begin position="379"/>
        <end position="384"/>
    </location>
</feature>
<feature type="strand" evidence="13">
    <location>
        <begin position="388"/>
        <end position="401"/>
    </location>
</feature>
<feature type="turn" evidence="13">
    <location>
        <begin position="403"/>
        <end position="405"/>
    </location>
</feature>
<feature type="strand" evidence="13">
    <location>
        <begin position="408"/>
        <end position="414"/>
    </location>
</feature>
<feature type="strand" evidence="13">
    <location>
        <begin position="421"/>
        <end position="424"/>
    </location>
</feature>
<feature type="strand" evidence="13">
    <location>
        <begin position="427"/>
        <end position="429"/>
    </location>
</feature>
<feature type="strand" evidence="13">
    <location>
        <begin position="435"/>
        <end position="443"/>
    </location>
</feature>
<feature type="strand" evidence="13">
    <location>
        <begin position="450"/>
        <end position="460"/>
    </location>
</feature>
<feature type="strand" evidence="13">
    <location>
        <begin position="462"/>
        <end position="467"/>
    </location>
</feature>
<evidence type="ECO:0000250" key="1">
    <source>
        <dbReference type="UniProtKB" id="O85465"/>
    </source>
</evidence>
<evidence type="ECO:0000255" key="2"/>
<evidence type="ECO:0000255" key="3">
    <source>
        <dbReference type="PROSITE-ProRule" id="PRU00303"/>
    </source>
</evidence>
<evidence type="ECO:0000256" key="4">
    <source>
        <dbReference type="SAM" id="MobiDB-lite"/>
    </source>
</evidence>
<evidence type="ECO:0000269" key="5">
    <source>
    </source>
</evidence>
<evidence type="ECO:0000303" key="6">
    <source>
    </source>
</evidence>
<evidence type="ECO:0000305" key="7"/>
<evidence type="ECO:0000305" key="8">
    <source>
    </source>
</evidence>
<evidence type="ECO:0000312" key="9">
    <source>
        <dbReference type="EMBL" id="CBH49814.1"/>
    </source>
</evidence>
<evidence type="ECO:0007744" key="10">
    <source>
        <dbReference type="PDB" id="5CCU"/>
    </source>
</evidence>
<evidence type="ECO:0007744" key="11">
    <source>
        <dbReference type="PDB" id="5J14"/>
    </source>
</evidence>
<evidence type="ECO:0007744" key="12">
    <source>
        <dbReference type="PDB" id="5J7Z"/>
    </source>
</evidence>
<evidence type="ECO:0007829" key="13">
    <source>
        <dbReference type="PDB" id="5J14"/>
    </source>
</evidence>
<protein>
    <recommendedName>
        <fullName evidence="6">Endoglycoceramidase I</fullName>
        <shortName evidence="6">EGCase I</shortName>
        <ecNumber evidence="5">3.2.1.123</ecNumber>
    </recommendedName>
</protein>
<reference key="1">
    <citation type="journal article" date="2010" name="PLoS Genet.">
        <title>The genome of a pathogenic rhodococcus: cooptive virulence underpinned by key gene acquisitions.</title>
        <authorList>
            <person name="Letek M."/>
            <person name="Gonzalez P."/>
            <person name="Macarthur I."/>
            <person name="Rodriguez H."/>
            <person name="Freeman T.C."/>
            <person name="Valero-Rello A."/>
            <person name="Blanco M."/>
            <person name="Buckley T."/>
            <person name="Cherevach I."/>
            <person name="Fahey R."/>
            <person name="Hapeshi A."/>
            <person name="Holdstock J."/>
            <person name="Leadon D."/>
            <person name="Navas J."/>
            <person name="Ocampo A."/>
            <person name="Quail M.A."/>
            <person name="Sanders M."/>
            <person name="Scortti M.M."/>
            <person name="Prescott J.F."/>
            <person name="Fogarty U."/>
            <person name="Meijer W.G."/>
            <person name="Parkhill J."/>
            <person name="Bentley S.D."/>
            <person name="Vazquez-Boland J.A."/>
        </authorList>
    </citation>
    <scope>NUCLEOTIDE SEQUENCE [LARGE SCALE GENOMIC DNA]</scope>
    <source>
        <strain>103S</strain>
    </source>
</reference>
<reference evidence="10 11 12" key="2">
    <citation type="journal article" date="2017" name="J. Biol. Chem.">
        <title>Structural Insights into the Broad Substrate Specificity of a Novel Endoglycoceramidase I Belonging to a New Subfamily of GH5 Glycosidases.</title>
        <authorList>
            <person name="Han Y.B."/>
            <person name="Chen L.Q."/>
            <person name="Li Z."/>
            <person name="Tan Y.M."/>
            <person name="Feng Y."/>
            <person name="Yang G.Y."/>
        </authorList>
    </citation>
    <scope>X-RAY CRYSTALLOGRAPHY (1.92 ANGSTROMS) OF 27-492 OF MUTANT SER-339 IN COMPLEX WITH MONOSIALODIHEXOSYLGANGLIOSIDE (GM3) AND MONOSIALOTETRAHEXOSYLGANGLIOSIDE (GM1)</scope>
    <scope>FUNCTION</scope>
    <scope>CATALYTIC ACTIVITY</scope>
    <scope>BIOPHYSICOCHEMICAL PROPERTIES</scope>
    <scope>SUBCELLULAR LOCATION</scope>
    <scope>ACTIVE SITE</scope>
    <scope>DISULFIDE BONDS</scope>
    <scope>MUTAGENESIS OF LYS-61; ASP-62; HIS-131; ASP-133; ASN-213; ASN-265; GLN-298; TYR-302; GLU-339; ASP-342 AND TRP-365</scope>
</reference>
<name>EGCSE_RHOH1</name>
<gene>
    <name evidence="9" type="ordered locus">REQ_38260</name>
</gene>
<comment type="function">
    <text evidence="5">Hydrolyzes glycosphingolipids; exhibits broad substrate specificity including monosialodihexosylganglioside (GM3), monosialotetrahexosylganglioside (GM1), fucosyl-GM1, lactosylceramide, globotriosylceramide, globotetraosylceramide, ganglioside GD1a, and ganglioside GD1b (PubMed:28179425). No activity towards glucosylceramide and galactosylceramide (PubMed:28179425).</text>
</comment>
<comment type="catalytic activity">
    <reaction evidence="5">
        <text>an oligoglycosyl-(1-&gt;4)-beta-D-glucosyl-(1&lt;-&gt;1)-ceramide + H2O = an oligoglycosyl-(1-&gt;4)-D-glucose + an N-acyl-sphingoid base</text>
        <dbReference type="Rhea" id="RHEA:22288"/>
        <dbReference type="ChEBI" id="CHEBI:15377"/>
        <dbReference type="ChEBI" id="CHEBI:83273"/>
        <dbReference type="ChEBI" id="CHEBI:136875"/>
        <dbReference type="ChEBI" id="CHEBI:156536"/>
        <dbReference type="EC" id="3.2.1.123"/>
    </reaction>
    <physiologicalReaction direction="left-to-right" evidence="5">
        <dbReference type="Rhea" id="RHEA:22289"/>
    </physiologicalReaction>
</comment>
<comment type="catalytic activity">
    <reaction evidence="5">
        <text>a ganglioside GM3 + H2O = N-acetyl-alpha-neuraminosyl-(2-&gt;3)-beta-D-galactosyl-(1-&gt;4)-D-glucose + an N-acyl-sphingoid base</text>
        <dbReference type="Rhea" id="RHEA:65540"/>
        <dbReference type="ChEBI" id="CHEBI:15377"/>
        <dbReference type="ChEBI" id="CHEBI:79210"/>
        <dbReference type="ChEBI" id="CHEBI:83273"/>
        <dbReference type="ChEBI" id="CHEBI:156068"/>
    </reaction>
    <physiologicalReaction direction="left-to-right" evidence="5">
        <dbReference type="Rhea" id="RHEA:65541"/>
    </physiologicalReaction>
</comment>
<comment type="catalytic activity">
    <reaction evidence="5">
        <text>a ganglioside GM1 + H2O = beta-D-Gal-(1-&gt;3)-beta-D-GalNAc-(1-&gt;4)-[alpha-Neu5Ac-(2-&gt;3)]-beta-D-Gal-(1-&gt;4)-D-Glc + an N-acyl-sphingoid base</text>
        <dbReference type="Rhea" id="RHEA:65544"/>
        <dbReference type="ChEBI" id="CHEBI:15377"/>
        <dbReference type="ChEBI" id="CHEBI:82639"/>
        <dbReference type="ChEBI" id="CHEBI:83273"/>
        <dbReference type="ChEBI" id="CHEBI:156537"/>
    </reaction>
    <physiologicalReaction direction="left-to-right" evidence="5">
        <dbReference type="Rhea" id="RHEA:65545"/>
    </physiologicalReaction>
</comment>
<comment type="catalytic activity">
    <reaction evidence="5">
        <text>a ganglioside Fuc-GM1 + H2O = alpha-Fuc-(1-&gt;2)-beta-Gal-(1-&gt;3)-beta-GalNAc-(1-&gt;4)-[alpha-Neu5Ac-(2-&gt;3)]-beta-Gal-(1-&gt;4)-Glc + an N-acyl-sphingoid base</text>
        <dbReference type="Rhea" id="RHEA:65548"/>
        <dbReference type="ChEBI" id="CHEBI:15377"/>
        <dbReference type="ChEBI" id="CHEBI:83273"/>
        <dbReference type="ChEBI" id="CHEBI:90189"/>
        <dbReference type="ChEBI" id="CHEBI:156538"/>
    </reaction>
    <physiologicalReaction direction="left-to-right" evidence="5">
        <dbReference type="Rhea" id="RHEA:65549"/>
    </physiologicalReaction>
</comment>
<comment type="catalytic activity">
    <reaction evidence="5">
        <text>a beta-D-galactosyl-(1-&gt;4)-beta-D-glucosyl-(1&lt;-&gt;1)-ceramide + H2O = lactose + an N-acyl-sphingoid base</text>
        <dbReference type="Rhea" id="RHEA:65552"/>
        <dbReference type="ChEBI" id="CHEBI:15377"/>
        <dbReference type="ChEBI" id="CHEBI:17716"/>
        <dbReference type="ChEBI" id="CHEBI:79208"/>
        <dbReference type="ChEBI" id="CHEBI:83273"/>
    </reaction>
    <physiologicalReaction direction="left-to-right" evidence="5">
        <dbReference type="Rhea" id="RHEA:65553"/>
    </physiologicalReaction>
</comment>
<comment type="biophysicochemical properties">
    <kinetics>
        <KM evidence="5">0.23 mM for monosialotetrahexosylganglioside (GM1)</KM>
        <text evidence="5">kcat is 10.5 sec(-1) with monosialotetrahexosylganglioside as substrate.</text>
    </kinetics>
</comment>
<comment type="subcellular location">
    <subcellularLocation>
        <location evidence="5">Secreted</location>
    </subcellularLocation>
    <subcellularLocation>
        <location evidence="3">Membrane</location>
        <topology evidence="3">Lipid-anchor</topology>
    </subcellularLocation>
</comment>
<comment type="similarity">
    <text evidence="7">Belongs to the glycosyl hydrolase 5 (cellulase A) family.</text>
</comment>
<accession>A0A3S5YBC7</accession>
<proteinExistence type="evidence at protein level"/>
<sequence>MRKTVVAFAAAIAACSAVLSSTTTSAAPPATPITTLQADGTHLVDGYGRTVLLHGVNNVDKDAPYLPAGETLTPQDIDILVRHGFNTVRLGTSFDALMPQRGQIDEAYLDRLTGVVDALTARGMHVLLDNHQDGLSKAWGGNGFPEWAIESRPREWEPNPGFPLYYLMPSLNAGWDEVWGNTHGALDHLGTALGALAERVEGKPGVMGIELLNEPWPGSRFLSCFPNGCPDFDRTYQAAMQKLTDAVRAQNPTIPVYWEPNVTWNQMMPSNLFAPPVTPALTTADVVFAPHDYCIPSQLAIYLGLPQALRGLCVPQQDLTWSNIDAITERANVPTVITEFGDGDPTVLKNTLARADERFIGWQYWHFGAGNATDPFLGEVGRQLVRTYPQATAGEPGRMIFDADNGDFAYRFTPRAATRPTEIFVSDLHYPDGYAVQVDGGQVTSAPGARIVTVVADGSGPVTVKINRPGSAGAEVPDGPIETSSSGSSGSS</sequence>
<keyword id="KW-0002">3D-structure</keyword>
<keyword id="KW-1015">Disulfide bond</keyword>
<keyword id="KW-0326">Glycosidase</keyword>
<keyword id="KW-0378">Hydrolase</keyword>
<keyword id="KW-0443">Lipid metabolism</keyword>
<keyword id="KW-0449">Lipoprotein</keyword>
<keyword id="KW-0472">Membrane</keyword>
<keyword id="KW-0564">Palmitate</keyword>
<keyword id="KW-0964">Secreted</keyword>
<keyword id="KW-0732">Signal</keyword>
<keyword id="KW-0746">Sphingolipid metabolism</keyword>
<organism>
    <name type="scientific">Rhodococcus hoagii (strain 103S)</name>
    <name type="common">Rhodococcus equi</name>
    <dbReference type="NCBI Taxonomy" id="685727"/>
    <lineage>
        <taxon>Bacteria</taxon>
        <taxon>Bacillati</taxon>
        <taxon>Actinomycetota</taxon>
        <taxon>Actinomycetes</taxon>
        <taxon>Mycobacteriales</taxon>
        <taxon>Nocardiaceae</taxon>
        <taxon>Prescottella</taxon>
    </lineage>
</organism>
<dbReference type="EC" id="3.2.1.123" evidence="5"/>
<dbReference type="EMBL" id="FN563149">
    <property type="protein sequence ID" value="CBH49814.1"/>
    <property type="molecule type" value="Genomic_DNA"/>
</dbReference>
<dbReference type="RefSeq" id="WP_013417039.1">
    <property type="nucleotide sequence ID" value="NC_014659.1"/>
</dbReference>
<dbReference type="PDB" id="5CCU">
    <property type="method" value="X-ray"/>
    <property type="resolution" value="2.11 A"/>
    <property type="chains" value="A/B=27-492"/>
</dbReference>
<dbReference type="PDB" id="5J14">
    <property type="method" value="X-ray"/>
    <property type="resolution" value="1.92 A"/>
    <property type="chains" value="A/B=27-492"/>
</dbReference>
<dbReference type="PDB" id="5J7Z">
    <property type="method" value="X-ray"/>
    <property type="resolution" value="2.15 A"/>
    <property type="chains" value="A/B=27-492"/>
</dbReference>
<dbReference type="PDBsum" id="5CCU"/>
<dbReference type="PDBsum" id="5J14"/>
<dbReference type="PDBsum" id="5J7Z"/>
<dbReference type="SMR" id="A0A3S5YBC7"/>
<dbReference type="KEGG" id="req:REQ_38260"/>
<dbReference type="BRENDA" id="3.2.1.123">
    <property type="organism ID" value="1646"/>
</dbReference>
<dbReference type="Proteomes" id="UP001154400">
    <property type="component" value="Chromosome"/>
</dbReference>
<dbReference type="GO" id="GO:0005576">
    <property type="term" value="C:extracellular region"/>
    <property type="evidence" value="ECO:0007669"/>
    <property type="project" value="UniProtKB-SubCell"/>
</dbReference>
<dbReference type="GO" id="GO:0016020">
    <property type="term" value="C:membrane"/>
    <property type="evidence" value="ECO:0007669"/>
    <property type="project" value="UniProtKB-SubCell"/>
</dbReference>
<dbReference type="GO" id="GO:0047876">
    <property type="term" value="F:endoglycosylceramidase activity"/>
    <property type="evidence" value="ECO:0000314"/>
    <property type="project" value="UniProtKB"/>
</dbReference>
<dbReference type="GO" id="GO:0006683">
    <property type="term" value="P:galactosylceramide catabolic process"/>
    <property type="evidence" value="ECO:0000314"/>
    <property type="project" value="UniProtKB"/>
</dbReference>
<dbReference type="GO" id="GO:0000272">
    <property type="term" value="P:polysaccharide catabolic process"/>
    <property type="evidence" value="ECO:0007669"/>
    <property type="project" value="InterPro"/>
</dbReference>
<dbReference type="Gene3D" id="3.20.20.80">
    <property type="entry name" value="Glycosidases"/>
    <property type="match status" value="1"/>
</dbReference>
<dbReference type="Gene3D" id="2.60.40.1180">
    <property type="entry name" value="Golgi alpha-mannosidase II"/>
    <property type="match status" value="1"/>
</dbReference>
<dbReference type="InterPro" id="IPR041036">
    <property type="entry name" value="GH5_C"/>
</dbReference>
<dbReference type="InterPro" id="IPR001547">
    <property type="entry name" value="Glyco_hydro_5"/>
</dbReference>
<dbReference type="InterPro" id="IPR013780">
    <property type="entry name" value="Glyco_hydro_b"/>
</dbReference>
<dbReference type="InterPro" id="IPR017853">
    <property type="entry name" value="Glycoside_hydrolase_SF"/>
</dbReference>
<dbReference type="InterPro" id="IPR052066">
    <property type="entry name" value="Glycosphingolipid_Hydrolases"/>
</dbReference>
<dbReference type="PANTHER" id="PTHR31308">
    <property type="match status" value="1"/>
</dbReference>
<dbReference type="PANTHER" id="PTHR31308:SF3">
    <property type="entry name" value="ENDOGLYCOCERAMIDASE"/>
    <property type="match status" value="1"/>
</dbReference>
<dbReference type="Pfam" id="PF00150">
    <property type="entry name" value="Cellulase"/>
    <property type="match status" value="1"/>
</dbReference>
<dbReference type="Pfam" id="PF18564">
    <property type="entry name" value="Glyco_hydro_5_C"/>
    <property type="match status" value="1"/>
</dbReference>
<dbReference type="SUPFAM" id="SSF51445">
    <property type="entry name" value="(Trans)glycosidases"/>
    <property type="match status" value="1"/>
</dbReference>
<dbReference type="PROSITE" id="PS51257">
    <property type="entry name" value="PROKAR_LIPOPROTEIN"/>
    <property type="match status" value="1"/>
</dbReference>